<name>PIR_RAT</name>
<evidence type="ECO:0000250" key="1"/>
<evidence type="ECO:0000305" key="2"/>
<reference key="1">
    <citation type="journal article" date="2004" name="Genome Res.">
        <title>The status, quality, and expansion of the NIH full-length cDNA project: the Mammalian Gene Collection (MGC).</title>
        <authorList>
            <consortium name="The MGC Project Team"/>
        </authorList>
    </citation>
    <scope>NUCLEOTIDE SEQUENCE [LARGE SCALE MRNA]</scope>
    <source>
        <tissue>Liver</tissue>
    </source>
</reference>
<reference key="2">
    <citation type="submission" date="2007-04" db="UniProtKB">
        <authorList>
            <person name="Lubec G."/>
            <person name="Diao W."/>
        </authorList>
    </citation>
    <scope>PROTEIN SEQUENCE OF 35-46 AND 145-160</scope>
    <scope>IDENTIFICATION BY MASS SPECTROMETRY</scope>
    <source>
        <strain>Sprague-Dawley</strain>
        <tissue>Hippocampus</tissue>
    </source>
</reference>
<gene>
    <name type="primary">Pir</name>
</gene>
<protein>
    <recommendedName>
        <fullName>Pirin</fullName>
        <ecNumber>1.13.11.24</ecNumber>
    </recommendedName>
    <alternativeName>
        <fullName>Probable quercetin 2,3-dioxygenase PIR</fullName>
        <shortName>Probable quercetinase</shortName>
    </alternativeName>
</protein>
<dbReference type="EC" id="1.13.11.24"/>
<dbReference type="EMBL" id="BC088290">
    <property type="protein sequence ID" value="AAH88290.1"/>
    <property type="molecule type" value="mRNA"/>
</dbReference>
<dbReference type="RefSeq" id="NP_001009474.1">
    <property type="nucleotide sequence ID" value="NM_001009474.1"/>
</dbReference>
<dbReference type="SMR" id="Q5M827"/>
<dbReference type="FunCoup" id="Q5M827">
    <property type="interactions" value="141"/>
</dbReference>
<dbReference type="STRING" id="10116.ENSRNOP00000004884"/>
<dbReference type="iPTMnet" id="Q5M827"/>
<dbReference type="PhosphoSitePlus" id="Q5M827"/>
<dbReference type="jPOST" id="Q5M827"/>
<dbReference type="PaxDb" id="10116-ENSRNOP00000004884"/>
<dbReference type="Ensembl" id="ENSRNOT00000004884.6">
    <property type="protein sequence ID" value="ENSRNOP00000004884.5"/>
    <property type="gene ID" value="ENSRNOG00000003674.6"/>
</dbReference>
<dbReference type="GeneID" id="363465"/>
<dbReference type="KEGG" id="rno:363465"/>
<dbReference type="UCSC" id="RGD:1359212">
    <property type="organism name" value="rat"/>
</dbReference>
<dbReference type="AGR" id="RGD:1359212"/>
<dbReference type="CTD" id="8544"/>
<dbReference type="RGD" id="1359212">
    <property type="gene designation" value="Pir"/>
</dbReference>
<dbReference type="eggNOG" id="ENOG502QQ5A">
    <property type="taxonomic scope" value="Eukaryota"/>
</dbReference>
<dbReference type="GeneTree" id="ENSGT00390000008044"/>
<dbReference type="HOGENOM" id="CLU_045717_0_1_1"/>
<dbReference type="InParanoid" id="Q5M827"/>
<dbReference type="OMA" id="TPWHPHR"/>
<dbReference type="OrthoDB" id="198735at2759"/>
<dbReference type="PhylomeDB" id="Q5M827"/>
<dbReference type="TreeFam" id="TF300002"/>
<dbReference type="Reactome" id="R-RNO-8935690">
    <property type="pathway name" value="Digestion"/>
</dbReference>
<dbReference type="UniPathway" id="UPA00724"/>
<dbReference type="PRO" id="PR:Q5M827"/>
<dbReference type="Proteomes" id="UP000002494">
    <property type="component" value="Chromosome X"/>
</dbReference>
<dbReference type="Bgee" id="ENSRNOG00000003674">
    <property type="expression patterns" value="Expressed in esophagus and 19 other cell types or tissues"/>
</dbReference>
<dbReference type="GO" id="GO:0005737">
    <property type="term" value="C:cytoplasm"/>
    <property type="evidence" value="ECO:0000250"/>
    <property type="project" value="UniProtKB"/>
</dbReference>
<dbReference type="GO" id="GO:0005829">
    <property type="term" value="C:cytosol"/>
    <property type="evidence" value="ECO:0007669"/>
    <property type="project" value="Ensembl"/>
</dbReference>
<dbReference type="GO" id="GO:0016604">
    <property type="term" value="C:nuclear body"/>
    <property type="evidence" value="ECO:0007669"/>
    <property type="project" value="Ensembl"/>
</dbReference>
<dbReference type="GO" id="GO:0005634">
    <property type="term" value="C:nucleus"/>
    <property type="evidence" value="ECO:0000250"/>
    <property type="project" value="UniProtKB"/>
</dbReference>
<dbReference type="GO" id="GO:0046872">
    <property type="term" value="F:metal ion binding"/>
    <property type="evidence" value="ECO:0000250"/>
    <property type="project" value="UniProtKB"/>
</dbReference>
<dbReference type="GO" id="GO:0008127">
    <property type="term" value="F:quercetin 2,3-dioxygenase activity"/>
    <property type="evidence" value="ECO:0000250"/>
    <property type="project" value="UniProtKB"/>
</dbReference>
<dbReference type="GO" id="GO:0003712">
    <property type="term" value="F:transcription coregulator activity"/>
    <property type="evidence" value="ECO:0000250"/>
    <property type="project" value="UniProtKB"/>
</dbReference>
<dbReference type="GO" id="GO:0030224">
    <property type="term" value="P:monocyte differentiation"/>
    <property type="evidence" value="ECO:0000266"/>
    <property type="project" value="RGD"/>
</dbReference>
<dbReference type="GO" id="GO:0030099">
    <property type="term" value="P:myeloid cell differentiation"/>
    <property type="evidence" value="ECO:0000266"/>
    <property type="project" value="RGD"/>
</dbReference>
<dbReference type="CDD" id="cd20288">
    <property type="entry name" value="cupin_pirin-like_C"/>
    <property type="match status" value="1"/>
</dbReference>
<dbReference type="CDD" id="cd02909">
    <property type="entry name" value="cupin_pirin_N"/>
    <property type="match status" value="1"/>
</dbReference>
<dbReference type="FunFam" id="2.60.120.10:FF:000055">
    <property type="entry name" value="pirin"/>
    <property type="match status" value="1"/>
</dbReference>
<dbReference type="Gene3D" id="2.60.120.10">
    <property type="entry name" value="Jelly Rolls"/>
    <property type="match status" value="2"/>
</dbReference>
<dbReference type="InterPro" id="IPR012093">
    <property type="entry name" value="Pirin"/>
</dbReference>
<dbReference type="InterPro" id="IPR008778">
    <property type="entry name" value="Pirin_C_dom"/>
</dbReference>
<dbReference type="InterPro" id="IPR003829">
    <property type="entry name" value="Pirin_N_dom"/>
</dbReference>
<dbReference type="InterPro" id="IPR014710">
    <property type="entry name" value="RmlC-like_jellyroll"/>
</dbReference>
<dbReference type="InterPro" id="IPR011051">
    <property type="entry name" value="RmlC_Cupin_sf"/>
</dbReference>
<dbReference type="PANTHER" id="PTHR13903:SF8">
    <property type="entry name" value="PIRIN"/>
    <property type="match status" value="1"/>
</dbReference>
<dbReference type="PANTHER" id="PTHR13903">
    <property type="entry name" value="PIRIN-RELATED"/>
    <property type="match status" value="1"/>
</dbReference>
<dbReference type="Pfam" id="PF02678">
    <property type="entry name" value="Pirin"/>
    <property type="match status" value="1"/>
</dbReference>
<dbReference type="Pfam" id="PF05726">
    <property type="entry name" value="Pirin_C"/>
    <property type="match status" value="1"/>
</dbReference>
<dbReference type="PIRSF" id="PIRSF006232">
    <property type="entry name" value="Pirin"/>
    <property type="match status" value="1"/>
</dbReference>
<dbReference type="SUPFAM" id="SSF51182">
    <property type="entry name" value="RmlC-like cupins"/>
    <property type="match status" value="1"/>
</dbReference>
<accession>Q5M827</accession>
<comment type="function">
    <text evidence="1">Transcriptional coregulator of NF-kappa-B which facilitates binding of NF-kappa-B proteins to target kappa-B genes in a redox-state-dependent manner. May be required for efficient terminal myeloid maturation of hematopoietic cells. Has quercetin 2,3-dioxygenase activity (in vitro) (By similarity).</text>
</comment>
<comment type="catalytic activity">
    <reaction>
        <text>quercetin + O2 = 2-(3,4-dihydroxybenzoyloxy)-4,6-dihydroxybenzoate + CO</text>
        <dbReference type="Rhea" id="RHEA:15381"/>
        <dbReference type="ChEBI" id="CHEBI:15379"/>
        <dbReference type="ChEBI" id="CHEBI:17245"/>
        <dbReference type="ChEBI" id="CHEBI:57628"/>
        <dbReference type="ChEBI" id="CHEBI:57694"/>
        <dbReference type="EC" id="1.13.11.24"/>
    </reaction>
</comment>
<comment type="cofactor">
    <cofactor evidence="1">
        <name>Fe cation</name>
        <dbReference type="ChEBI" id="CHEBI:24875"/>
    </cofactor>
    <text evidence="1">Binds 1 Fe cation per subunit.</text>
</comment>
<comment type="pathway">
    <text>Flavonoid metabolism; quercetin degradation.</text>
</comment>
<comment type="subunit">
    <text evidence="1">May interact with NF1/CTF1. Interacts with BCL3. Identified in a complex comprised of PIR, BLC3, NFKB1 and target DNA (By similarity).</text>
</comment>
<comment type="subcellular location">
    <subcellularLocation>
        <location evidence="1">Nucleus</location>
    </subcellularLocation>
    <subcellularLocation>
        <location evidence="1">Cytoplasm</location>
    </subcellularLocation>
    <text evidence="1">Predominantly localized in dot-like subnuclear structures.</text>
</comment>
<comment type="similarity">
    <text evidence="2">Belongs to the pirin family.</text>
</comment>
<organism>
    <name type="scientific">Rattus norvegicus</name>
    <name type="common">Rat</name>
    <dbReference type="NCBI Taxonomy" id="10116"/>
    <lineage>
        <taxon>Eukaryota</taxon>
        <taxon>Metazoa</taxon>
        <taxon>Chordata</taxon>
        <taxon>Craniata</taxon>
        <taxon>Vertebrata</taxon>
        <taxon>Euteleostomi</taxon>
        <taxon>Mammalia</taxon>
        <taxon>Eutheria</taxon>
        <taxon>Euarchontoglires</taxon>
        <taxon>Glires</taxon>
        <taxon>Rodentia</taxon>
        <taxon>Myomorpha</taxon>
        <taxon>Muroidea</taxon>
        <taxon>Muridae</taxon>
        <taxon>Murinae</taxon>
        <taxon>Rattus</taxon>
    </lineage>
</organism>
<sequence length="291" mass="32179">MASSKKVTLSVLSREQSEGVGARVRRSIGGPELKMLDPFLLFDEFKGGRPGGFPDHPHRGFETVSYLLEGGSMAHEDFCGHVGKMNPGDLQWMTAGRGILHAEMPCSEEPAHGLQLWVNLKRSEKMVEPQYQELKSEEIPKPSKDGVTVAVISGEALGIKSKVYTRTPTLYLDFKLDQGAKHSQPIPKGWTSFIYTISGDVYIGPDDAQQKIEPHRTAVLGEGDTVQLENKDPKRSHFVLIAGEPLREPVVQHGPFVMNTNEEISEAILDFRNAKNGFEGAKTWKSKIGNQ</sequence>
<feature type="chain" id="PRO_0000288474" description="Pirin">
    <location>
        <begin position="1"/>
        <end position="291"/>
    </location>
</feature>
<feature type="binding site" evidence="1">
    <location>
        <position position="56"/>
    </location>
    <ligand>
        <name>Fe cation</name>
        <dbReference type="ChEBI" id="CHEBI:24875"/>
    </ligand>
</feature>
<feature type="binding site" evidence="1">
    <location>
        <position position="58"/>
    </location>
    <ligand>
        <name>Fe cation</name>
        <dbReference type="ChEBI" id="CHEBI:24875"/>
    </ligand>
</feature>
<feature type="binding site" evidence="1">
    <location>
        <position position="101"/>
    </location>
    <ligand>
        <name>Fe cation</name>
        <dbReference type="ChEBI" id="CHEBI:24875"/>
    </ligand>
</feature>
<feature type="binding site" evidence="1">
    <location>
        <position position="103"/>
    </location>
    <ligand>
        <name>Fe cation</name>
        <dbReference type="ChEBI" id="CHEBI:24875"/>
    </ligand>
</feature>
<keyword id="KW-0963">Cytoplasm</keyword>
<keyword id="KW-0223">Dioxygenase</keyword>
<keyword id="KW-0903">Direct protein sequencing</keyword>
<keyword id="KW-0408">Iron</keyword>
<keyword id="KW-0479">Metal-binding</keyword>
<keyword id="KW-0539">Nucleus</keyword>
<keyword id="KW-0560">Oxidoreductase</keyword>
<keyword id="KW-1185">Reference proteome</keyword>
<keyword id="KW-0804">Transcription</keyword>
<keyword id="KW-0805">Transcription regulation</keyword>
<proteinExistence type="evidence at protein level"/>